<organism>
    <name type="scientific">Coxiella burnetii (strain RSA 493 / Nine Mile phase I)</name>
    <dbReference type="NCBI Taxonomy" id="227377"/>
    <lineage>
        <taxon>Bacteria</taxon>
        <taxon>Pseudomonadati</taxon>
        <taxon>Pseudomonadota</taxon>
        <taxon>Gammaproteobacteria</taxon>
        <taxon>Legionellales</taxon>
        <taxon>Coxiellaceae</taxon>
        <taxon>Coxiella</taxon>
    </lineage>
</organism>
<protein>
    <recommendedName>
        <fullName evidence="1">tRNA-specific 2-thiouridylase MnmA</fullName>
        <ecNumber evidence="1">2.8.1.13</ecNumber>
    </recommendedName>
</protein>
<evidence type="ECO:0000255" key="1">
    <source>
        <dbReference type="HAMAP-Rule" id="MF_00144"/>
    </source>
</evidence>
<evidence type="ECO:0000305" key="2"/>
<reference key="1">
    <citation type="journal article" date="2003" name="Proc. Natl. Acad. Sci. U.S.A.">
        <title>Complete genome sequence of the Q-fever pathogen, Coxiella burnetii.</title>
        <authorList>
            <person name="Seshadri R."/>
            <person name="Paulsen I.T."/>
            <person name="Eisen J.A."/>
            <person name="Read T.D."/>
            <person name="Nelson K.E."/>
            <person name="Nelson W.C."/>
            <person name="Ward N.L."/>
            <person name="Tettelin H."/>
            <person name="Davidsen T.M."/>
            <person name="Beanan M.J."/>
            <person name="DeBoy R.T."/>
            <person name="Daugherty S.C."/>
            <person name="Brinkac L.M."/>
            <person name="Madupu R."/>
            <person name="Dodson R.J."/>
            <person name="Khouri H.M."/>
            <person name="Lee K.H."/>
            <person name="Carty H.A."/>
            <person name="Scanlan D."/>
            <person name="Heinzen R.A."/>
            <person name="Thompson H.A."/>
            <person name="Samuel J.E."/>
            <person name="Fraser C.M."/>
            <person name="Heidelberg J.F."/>
        </authorList>
    </citation>
    <scope>NUCLEOTIDE SEQUENCE [LARGE SCALE GENOMIC DNA]</scope>
    <source>
        <strain>RSA 493 / Nine Mile phase I</strain>
    </source>
</reference>
<accession>Q820W2</accession>
<name>MNMA_COXBU</name>
<dbReference type="EC" id="2.8.1.13" evidence="1"/>
<dbReference type="EMBL" id="AE016828">
    <property type="protein sequence ID" value="AAO90659.2"/>
    <property type="status" value="ALT_INIT"/>
    <property type="molecule type" value="Genomic_DNA"/>
</dbReference>
<dbReference type="RefSeq" id="NP_820145.2">
    <property type="nucleotide sequence ID" value="NC_002971.3"/>
</dbReference>
<dbReference type="RefSeq" id="WP_010958037.1">
    <property type="nucleotide sequence ID" value="NC_002971.4"/>
</dbReference>
<dbReference type="RefSeq" id="WP_032138352.1">
    <property type="nucleotide sequence ID" value="NZ_CCYB01000037.1"/>
</dbReference>
<dbReference type="SMR" id="Q820W2"/>
<dbReference type="STRING" id="227377.CBU_1147"/>
<dbReference type="EnsemblBacteria" id="AAO90659">
    <property type="protein sequence ID" value="AAO90659"/>
    <property type="gene ID" value="CBU_1147"/>
</dbReference>
<dbReference type="GeneID" id="1209049"/>
<dbReference type="KEGG" id="cbu:CBU_1147"/>
<dbReference type="PATRIC" id="fig|227377.7.peg.1140"/>
<dbReference type="eggNOG" id="COG0482">
    <property type="taxonomic scope" value="Bacteria"/>
</dbReference>
<dbReference type="HOGENOM" id="CLU_035188_1_0_6"/>
<dbReference type="OrthoDB" id="9800696at2"/>
<dbReference type="Proteomes" id="UP000002671">
    <property type="component" value="Chromosome"/>
</dbReference>
<dbReference type="GO" id="GO:0005737">
    <property type="term" value="C:cytoplasm"/>
    <property type="evidence" value="ECO:0007669"/>
    <property type="project" value="UniProtKB-SubCell"/>
</dbReference>
<dbReference type="GO" id="GO:0005524">
    <property type="term" value="F:ATP binding"/>
    <property type="evidence" value="ECO:0007669"/>
    <property type="project" value="UniProtKB-KW"/>
</dbReference>
<dbReference type="GO" id="GO:0000049">
    <property type="term" value="F:tRNA binding"/>
    <property type="evidence" value="ECO:0007669"/>
    <property type="project" value="UniProtKB-KW"/>
</dbReference>
<dbReference type="GO" id="GO:0103016">
    <property type="term" value="F:tRNA-uridine 2-sulfurtransferase activity"/>
    <property type="evidence" value="ECO:0007669"/>
    <property type="project" value="UniProtKB-EC"/>
</dbReference>
<dbReference type="GO" id="GO:0002143">
    <property type="term" value="P:tRNA wobble position uridine thiolation"/>
    <property type="evidence" value="ECO:0000318"/>
    <property type="project" value="GO_Central"/>
</dbReference>
<dbReference type="CDD" id="cd01998">
    <property type="entry name" value="MnmA_TRMU-like"/>
    <property type="match status" value="1"/>
</dbReference>
<dbReference type="FunFam" id="2.30.30.280:FF:000001">
    <property type="entry name" value="tRNA-specific 2-thiouridylase MnmA"/>
    <property type="match status" value="1"/>
</dbReference>
<dbReference type="FunFam" id="2.40.30.10:FF:000023">
    <property type="entry name" value="tRNA-specific 2-thiouridylase MnmA"/>
    <property type="match status" value="1"/>
</dbReference>
<dbReference type="FunFam" id="3.40.50.620:FF:000004">
    <property type="entry name" value="tRNA-specific 2-thiouridylase MnmA"/>
    <property type="match status" value="1"/>
</dbReference>
<dbReference type="Gene3D" id="2.30.30.280">
    <property type="entry name" value="Adenine nucleotide alpha hydrolases-like domains"/>
    <property type="match status" value="1"/>
</dbReference>
<dbReference type="Gene3D" id="3.40.50.620">
    <property type="entry name" value="HUPs"/>
    <property type="match status" value="1"/>
</dbReference>
<dbReference type="Gene3D" id="2.40.30.10">
    <property type="entry name" value="Translation factors"/>
    <property type="match status" value="1"/>
</dbReference>
<dbReference type="HAMAP" id="MF_00144">
    <property type="entry name" value="tRNA_thiouridyl_MnmA"/>
    <property type="match status" value="1"/>
</dbReference>
<dbReference type="InterPro" id="IPR004506">
    <property type="entry name" value="MnmA-like"/>
</dbReference>
<dbReference type="InterPro" id="IPR046885">
    <property type="entry name" value="MnmA-like_C"/>
</dbReference>
<dbReference type="InterPro" id="IPR046884">
    <property type="entry name" value="MnmA-like_central"/>
</dbReference>
<dbReference type="InterPro" id="IPR023382">
    <property type="entry name" value="MnmA-like_central_sf"/>
</dbReference>
<dbReference type="InterPro" id="IPR014729">
    <property type="entry name" value="Rossmann-like_a/b/a_fold"/>
</dbReference>
<dbReference type="NCBIfam" id="NF001138">
    <property type="entry name" value="PRK00143.1"/>
    <property type="match status" value="1"/>
</dbReference>
<dbReference type="NCBIfam" id="TIGR00420">
    <property type="entry name" value="trmU"/>
    <property type="match status" value="1"/>
</dbReference>
<dbReference type="PANTHER" id="PTHR11933:SF5">
    <property type="entry name" value="MITOCHONDRIAL TRNA-SPECIFIC 2-THIOURIDYLASE 1"/>
    <property type="match status" value="1"/>
</dbReference>
<dbReference type="PANTHER" id="PTHR11933">
    <property type="entry name" value="TRNA 5-METHYLAMINOMETHYL-2-THIOURIDYLATE -METHYLTRANSFERASE"/>
    <property type="match status" value="1"/>
</dbReference>
<dbReference type="Pfam" id="PF03054">
    <property type="entry name" value="tRNA_Me_trans"/>
    <property type="match status" value="1"/>
</dbReference>
<dbReference type="Pfam" id="PF20258">
    <property type="entry name" value="tRNA_Me_trans_C"/>
    <property type="match status" value="1"/>
</dbReference>
<dbReference type="Pfam" id="PF20259">
    <property type="entry name" value="tRNA_Me_trans_M"/>
    <property type="match status" value="1"/>
</dbReference>
<dbReference type="SUPFAM" id="SSF52402">
    <property type="entry name" value="Adenine nucleotide alpha hydrolases-like"/>
    <property type="match status" value="1"/>
</dbReference>
<proteinExistence type="inferred from homology"/>
<gene>
    <name evidence="1" type="primary">mnmA</name>
    <name type="synonym">trmU</name>
    <name type="ordered locus">CBU_1147</name>
</gene>
<sequence length="362" mass="40860">MPNFEQNQVIAVGLSGGVDSSVAALVLKEKGYEVIGLFMQNWETDSKDPFCTAEQDLSDAKAIADHIGIPLYVVNFSKAYWNHVFQHCLDEFAQGRTPNPDVWCNREIKFKSLLDHAKKLGATHLATGHYACIQNENNEYRLLKSNDSHKDQSYFLHLLNQYQLANSVFPIGGYQKSEVRAIAKKRGFINHAKKDSTGICFIGERKFKDFLNEFLLAQPGNIETSEGKIIGKHDGIMFYTVGQRKGLHIGGRPDAGEAPWYVVDKDVKRNVLIVVQGYEHPLLYSQELTCTNLHWIRDTEPSFPLTCKAKTRCRQADQTCVVTRLDNDHCHVQFEHPQRAITRGQSVVFYLGNECLGGGIIN</sequence>
<keyword id="KW-0067">ATP-binding</keyword>
<keyword id="KW-0963">Cytoplasm</keyword>
<keyword id="KW-1015">Disulfide bond</keyword>
<keyword id="KW-0547">Nucleotide-binding</keyword>
<keyword id="KW-1185">Reference proteome</keyword>
<keyword id="KW-0694">RNA-binding</keyword>
<keyword id="KW-0808">Transferase</keyword>
<keyword id="KW-0819">tRNA processing</keyword>
<keyword id="KW-0820">tRNA-binding</keyword>
<feature type="chain" id="PRO_0000244533" description="tRNA-specific 2-thiouridylase MnmA">
    <location>
        <begin position="1"/>
        <end position="362"/>
    </location>
</feature>
<feature type="region of interest" description="Interaction with target base in tRNA" evidence="1">
    <location>
        <begin position="99"/>
        <end position="101"/>
    </location>
</feature>
<feature type="region of interest" description="Interaction with tRNA" evidence="1">
    <location>
        <begin position="150"/>
        <end position="152"/>
    </location>
</feature>
<feature type="active site" description="Nucleophile" evidence="1">
    <location>
        <position position="104"/>
    </location>
</feature>
<feature type="active site" description="Cysteine persulfide intermediate" evidence="1">
    <location>
        <position position="200"/>
    </location>
</feature>
<feature type="binding site" evidence="1">
    <location>
        <begin position="13"/>
        <end position="20"/>
    </location>
    <ligand>
        <name>ATP</name>
        <dbReference type="ChEBI" id="CHEBI:30616"/>
    </ligand>
</feature>
<feature type="binding site" evidence="1">
    <location>
        <position position="39"/>
    </location>
    <ligand>
        <name>ATP</name>
        <dbReference type="ChEBI" id="CHEBI:30616"/>
    </ligand>
</feature>
<feature type="binding site" evidence="1">
    <location>
        <position position="128"/>
    </location>
    <ligand>
        <name>ATP</name>
        <dbReference type="ChEBI" id="CHEBI:30616"/>
    </ligand>
</feature>
<feature type="site" description="Interaction with tRNA" evidence="1">
    <location>
        <position position="129"/>
    </location>
</feature>
<feature type="site" description="Interaction with tRNA" evidence="1">
    <location>
        <position position="345"/>
    </location>
</feature>
<feature type="disulfide bond" description="Alternate" evidence="1">
    <location>
        <begin position="104"/>
        <end position="200"/>
    </location>
</feature>
<comment type="function">
    <text evidence="1">Catalyzes the 2-thiolation of uridine at the wobble position (U34) of tRNA, leading to the formation of s(2)U34.</text>
</comment>
<comment type="catalytic activity">
    <reaction evidence="1">
        <text>S-sulfanyl-L-cysteinyl-[protein] + uridine(34) in tRNA + AH2 + ATP = 2-thiouridine(34) in tRNA + L-cysteinyl-[protein] + A + AMP + diphosphate + H(+)</text>
        <dbReference type="Rhea" id="RHEA:47032"/>
        <dbReference type="Rhea" id="RHEA-COMP:10131"/>
        <dbReference type="Rhea" id="RHEA-COMP:11726"/>
        <dbReference type="Rhea" id="RHEA-COMP:11727"/>
        <dbReference type="Rhea" id="RHEA-COMP:11728"/>
        <dbReference type="ChEBI" id="CHEBI:13193"/>
        <dbReference type="ChEBI" id="CHEBI:15378"/>
        <dbReference type="ChEBI" id="CHEBI:17499"/>
        <dbReference type="ChEBI" id="CHEBI:29950"/>
        <dbReference type="ChEBI" id="CHEBI:30616"/>
        <dbReference type="ChEBI" id="CHEBI:33019"/>
        <dbReference type="ChEBI" id="CHEBI:61963"/>
        <dbReference type="ChEBI" id="CHEBI:65315"/>
        <dbReference type="ChEBI" id="CHEBI:87170"/>
        <dbReference type="ChEBI" id="CHEBI:456215"/>
        <dbReference type="EC" id="2.8.1.13"/>
    </reaction>
</comment>
<comment type="subcellular location">
    <subcellularLocation>
        <location evidence="1">Cytoplasm</location>
    </subcellularLocation>
</comment>
<comment type="similarity">
    <text evidence="1">Belongs to the MnmA/TRMU family.</text>
</comment>
<comment type="sequence caution" evidence="2">
    <conflict type="erroneous initiation">
        <sequence resource="EMBL-CDS" id="AAO90659"/>
    </conflict>
</comment>